<organism>
    <name type="scientific">Lotus japonicus</name>
    <name type="common">Lotus corniculatus var. japonicus</name>
    <dbReference type="NCBI Taxonomy" id="34305"/>
    <lineage>
        <taxon>Eukaryota</taxon>
        <taxon>Viridiplantae</taxon>
        <taxon>Streptophyta</taxon>
        <taxon>Embryophyta</taxon>
        <taxon>Tracheophyta</taxon>
        <taxon>Spermatophyta</taxon>
        <taxon>Magnoliopsida</taxon>
        <taxon>eudicotyledons</taxon>
        <taxon>Gunneridae</taxon>
        <taxon>Pentapetalae</taxon>
        <taxon>rosids</taxon>
        <taxon>fabids</taxon>
        <taxon>Fabales</taxon>
        <taxon>Fabaceae</taxon>
        <taxon>Papilionoideae</taxon>
        <taxon>50 kb inversion clade</taxon>
        <taxon>NPAAA clade</taxon>
        <taxon>Hologalegina</taxon>
        <taxon>robinioid clade</taxon>
        <taxon>Loteae</taxon>
        <taxon>Lotus</taxon>
    </lineage>
</organism>
<feature type="transit peptide" description="Chloroplast" evidence="3">
    <location>
        <begin position="1"/>
        <end position="25"/>
    </location>
</feature>
<feature type="chain" id="PRO_0000252338" description="Digalactosyldiacylglycerol synthase 1, chloroplastic">
    <location>
        <begin position="26"/>
        <end position="786"/>
    </location>
</feature>
<proteinExistence type="evidence at transcript level"/>
<accession>Q6DW74</accession>
<name>DGDG1_LOTJA</name>
<keyword id="KW-0150">Chloroplast</keyword>
<keyword id="KW-0328">Glycosyltransferase</keyword>
<keyword id="KW-0472">Membrane</keyword>
<keyword id="KW-0536">Nodulation</keyword>
<keyword id="KW-0934">Plastid</keyword>
<keyword id="KW-1002">Plastid outer membrane</keyword>
<keyword id="KW-0808">Transferase</keyword>
<keyword id="KW-0809">Transit peptide</keyword>
<protein>
    <recommendedName>
        <fullName evidence="5">Digalactosyldiacylglycerol synthase 1, chloroplastic</fullName>
        <shortName evidence="5">LjDGD1</shortName>
        <ecNumber evidence="1">2.4.1.241</ecNumber>
    </recommendedName>
</protein>
<reference key="1">
    <citation type="journal article" date="2004" name="J. Biol. Chem.">
        <title>The galactolipid digalactosyldiacylglycerol accumulates in the peribacteroid membrane of nitrogen-fixing nodules of Soybean and Lotus.</title>
        <authorList>
            <person name="Gaude N."/>
            <person name="Tippmann H."/>
            <person name="Flemetakis E."/>
            <person name="Katinakis P."/>
            <person name="Udvardi M."/>
            <person name="Doermann P."/>
        </authorList>
    </citation>
    <scope>NUCLEOTIDE SEQUENCE [MRNA]</scope>
    <scope>FUNCTION</scope>
    <scope>SUBCELLULAR LOCATION</scope>
    <scope>TISSUE SPECIFICITY</scope>
</reference>
<comment type="function">
    <text evidence="4">Involved in the synthesis of diacylglycerol galactolipids that are specifically found in thylakoid and in nodule peribacteroid membranes (PubMed:15159398). Specific for alpha-glycosidic linkages (PubMed:15159398).</text>
</comment>
<comment type="catalytic activity">
    <reaction evidence="1">
        <text>a 1,2-diacyl-3-O-(beta-D-galactosyl)-sn-glycerol + UDP-alpha-D-galactose = a 1,2-diacyl-3-O-[alpha-D-galactosyl-(1-&gt;6)-beta-D-galactosyl]-sn-glycerol + UDP + H(+)</text>
        <dbReference type="Rhea" id="RHEA:10520"/>
        <dbReference type="ChEBI" id="CHEBI:15378"/>
        <dbReference type="ChEBI" id="CHEBI:17615"/>
        <dbReference type="ChEBI" id="CHEBI:28396"/>
        <dbReference type="ChEBI" id="CHEBI:58223"/>
        <dbReference type="ChEBI" id="CHEBI:66914"/>
        <dbReference type="EC" id="2.4.1.241"/>
    </reaction>
</comment>
<comment type="subcellular location">
    <subcellularLocation>
        <location evidence="2">Plastid</location>
        <location evidence="2">Chloroplast outer membrane</location>
    </subcellularLocation>
    <subcellularLocation>
        <location evidence="1">Plastid outer membrane</location>
    </subcellularLocation>
</comment>
<comment type="tissue specificity">
    <text evidence="4">High expression in nodules infected cells, but low in nodule inner cortex and root central cylinder.</text>
</comment>
<comment type="similarity">
    <text evidence="6">Belongs to the glycosyltransferase group 1 family. Glycosyltransferase 4 subfamily.</text>
</comment>
<gene>
    <name evidence="5" type="primary">DGD1</name>
</gene>
<evidence type="ECO:0000250" key="1">
    <source>
        <dbReference type="UniProtKB" id="Q8W1S1"/>
    </source>
</evidence>
<evidence type="ECO:0000250" key="2">
    <source>
        <dbReference type="UniProtKB" id="Q9S7D1"/>
    </source>
</evidence>
<evidence type="ECO:0000255" key="3"/>
<evidence type="ECO:0000269" key="4">
    <source>
    </source>
</evidence>
<evidence type="ECO:0000303" key="5">
    <source>
    </source>
</evidence>
<evidence type="ECO:0000305" key="6"/>
<dbReference type="EC" id="2.4.1.241" evidence="1"/>
<dbReference type="EMBL" id="AY635909">
    <property type="protein sequence ID" value="AAT67422.1"/>
    <property type="molecule type" value="mRNA"/>
</dbReference>
<dbReference type="SMR" id="Q6DW74"/>
<dbReference type="CAZy" id="GT4">
    <property type="family name" value="Glycosyltransferase Family 4"/>
</dbReference>
<dbReference type="OrthoDB" id="44480at2759"/>
<dbReference type="GO" id="GO:0009707">
    <property type="term" value="C:chloroplast outer membrane"/>
    <property type="evidence" value="ECO:0007669"/>
    <property type="project" value="UniProtKB-SubCell"/>
</dbReference>
<dbReference type="GO" id="GO:0046481">
    <property type="term" value="F:digalactosyldiacylglycerol synthase activity"/>
    <property type="evidence" value="ECO:0007669"/>
    <property type="project" value="UniProtKB-EC"/>
</dbReference>
<dbReference type="GO" id="GO:0019375">
    <property type="term" value="P:galactolipid biosynthetic process"/>
    <property type="evidence" value="ECO:0007669"/>
    <property type="project" value="TreeGrafter"/>
</dbReference>
<dbReference type="GO" id="GO:0009877">
    <property type="term" value="P:nodulation"/>
    <property type="evidence" value="ECO:0007669"/>
    <property type="project" value="UniProtKB-KW"/>
</dbReference>
<dbReference type="CDD" id="cd01635">
    <property type="entry name" value="Glycosyltransferase_GTB-type"/>
    <property type="match status" value="1"/>
</dbReference>
<dbReference type="FunFam" id="3.40.50.2000:FF:000325">
    <property type="entry name" value="Digalactosyldiacylglycerol synthase 1, chloroplastic"/>
    <property type="match status" value="1"/>
</dbReference>
<dbReference type="FunFam" id="3.40.50.2000:FF:000218">
    <property type="entry name" value="Digalactosyldiacylglycerol synthase 1, chloroplastic-like"/>
    <property type="match status" value="1"/>
</dbReference>
<dbReference type="Gene3D" id="3.40.50.2000">
    <property type="entry name" value="Glycogen Phosphorylase B"/>
    <property type="match status" value="1"/>
</dbReference>
<dbReference type="InterPro" id="IPR044525">
    <property type="entry name" value="DGDG1/2"/>
</dbReference>
<dbReference type="InterPro" id="IPR001296">
    <property type="entry name" value="Glyco_trans_1"/>
</dbReference>
<dbReference type="PANTHER" id="PTHR46132:SF6">
    <property type="entry name" value="DIGALACTOSYLDIACYLGLYCEROL SYNTHASE 1, CHLOROPLASTIC"/>
    <property type="match status" value="1"/>
</dbReference>
<dbReference type="PANTHER" id="PTHR46132">
    <property type="entry name" value="DIGALACTOSYLDIACYLGLYCEROL SYNTHASE 2, CHLOROPLASTIC"/>
    <property type="match status" value="1"/>
</dbReference>
<dbReference type="Pfam" id="PF00534">
    <property type="entry name" value="Glycos_transf_1"/>
    <property type="match status" value="1"/>
</dbReference>
<dbReference type="SUPFAM" id="SSF53756">
    <property type="entry name" value="UDP-Glycosyltransferase/glycogen phosphorylase"/>
    <property type="match status" value="1"/>
</dbReference>
<sequence>MASQRQPPSSSNAFSFLSKGWREVRDSADADLQLMKDRANSFKNLATSFDRELENFFNSAAPAFSVPAMRSASPPPAEIEFVKKLQPKLSEFRRAYSSPDFSKKVLEKWRPRARIRIDLSAIKNAIVSEEIDEGIVDFERGKRERRLSFWEELKGEGEAQDWEPIRALKTRLKEFEKRSSSVEFFDGFKNSEFLEKVKSSLKSMCKEPRDSKEVPPLDVAELLAYFVKQSGPFLDQLGVRRDVCDKIVESLYSKRKNQLLLPSLSGEESSLLGNGNINDELDLRIASVLQSTGHRNEGGFWTDHAKHDLSDNERHVAIVTTASLPWMTGTAVNPLFRAAYLSQSEKQKVTLLVPWLCKSDQELVYPSNLTFTSPEEQEGYIRNWLEERIGFKADFKISFYPGKFSQARRSIIPAGDTAQFIPSKDADIAILEEPEHLNWYHHGTRWTDKFNHVVGIVHTNYLEYIKREKNGALQAFLVKHINNWVARAYCDKVLRLSAATQDLPKSVVCNVHGVNPKFLKIGESIAAERELGQKGFTKGAYFLGKMVWAKGYKELIDLLAKHKADLDGVKLDVFGNGEDANEVQSAARRFDLNLNFQKGRDHADDSLHRYKVFINPSISDVLCTATAEALAMGKFVVCADHPSNEFFRSFPNCLTYKTPEDFAVKVKEALANEPYPLTPEQRYQLSWEAATQRFMEYSELDKVLNKEKDGAKPSKNNRKIMAKSASMPNLTELVDGGLAFAHYCLTGNEFLRLCTGATPGTRDYDKQHCKDLNLLPPQVENPIYGW</sequence>